<evidence type="ECO:0000255" key="1">
    <source>
        <dbReference type="HAMAP-Rule" id="MF_00244"/>
    </source>
</evidence>
<comment type="function">
    <text evidence="1">Catalyzes the reversible adenylation of nicotinate mononucleotide (NaMN) to nicotinic acid adenine dinucleotide (NaAD).</text>
</comment>
<comment type="catalytic activity">
    <reaction evidence="1">
        <text>nicotinate beta-D-ribonucleotide + ATP + H(+) = deamido-NAD(+) + diphosphate</text>
        <dbReference type="Rhea" id="RHEA:22860"/>
        <dbReference type="ChEBI" id="CHEBI:15378"/>
        <dbReference type="ChEBI" id="CHEBI:30616"/>
        <dbReference type="ChEBI" id="CHEBI:33019"/>
        <dbReference type="ChEBI" id="CHEBI:57502"/>
        <dbReference type="ChEBI" id="CHEBI:58437"/>
        <dbReference type="EC" id="2.7.7.18"/>
    </reaction>
</comment>
<comment type="pathway">
    <text evidence="1">Cofactor biosynthesis; NAD(+) biosynthesis; deamido-NAD(+) from nicotinate D-ribonucleotide: step 1/1.</text>
</comment>
<comment type="similarity">
    <text evidence="1">Belongs to the NadD family.</text>
</comment>
<protein>
    <recommendedName>
        <fullName evidence="1">Probable nicotinate-nucleotide adenylyltransferase</fullName>
        <ecNumber evidence="1">2.7.7.18</ecNumber>
    </recommendedName>
    <alternativeName>
        <fullName evidence="1">Deamido-NAD(+) diphosphorylase</fullName>
    </alternativeName>
    <alternativeName>
        <fullName evidence="1">Deamido-NAD(+) pyrophosphorylase</fullName>
    </alternativeName>
    <alternativeName>
        <fullName evidence="1">Nicotinate mononucleotide adenylyltransferase</fullName>
        <shortName evidence="1">NaMN adenylyltransferase</shortName>
    </alternativeName>
</protein>
<dbReference type="EC" id="2.7.7.18" evidence="1"/>
<dbReference type="EMBL" id="AE009442">
    <property type="protein sequence ID" value="AAO29083.1"/>
    <property type="molecule type" value="Genomic_DNA"/>
</dbReference>
<dbReference type="RefSeq" id="WP_004088581.1">
    <property type="nucleotide sequence ID" value="NC_004556.1"/>
</dbReference>
<dbReference type="SMR" id="Q87C62"/>
<dbReference type="GeneID" id="93905033"/>
<dbReference type="KEGG" id="xft:PD_1233"/>
<dbReference type="HOGENOM" id="CLU_069765_0_0_6"/>
<dbReference type="UniPathway" id="UPA00253">
    <property type="reaction ID" value="UER00332"/>
</dbReference>
<dbReference type="Proteomes" id="UP000002516">
    <property type="component" value="Chromosome"/>
</dbReference>
<dbReference type="GO" id="GO:0005524">
    <property type="term" value="F:ATP binding"/>
    <property type="evidence" value="ECO:0007669"/>
    <property type="project" value="UniProtKB-KW"/>
</dbReference>
<dbReference type="GO" id="GO:0004515">
    <property type="term" value="F:nicotinate-nucleotide adenylyltransferase activity"/>
    <property type="evidence" value="ECO:0007669"/>
    <property type="project" value="UniProtKB-UniRule"/>
</dbReference>
<dbReference type="GO" id="GO:0009435">
    <property type="term" value="P:NAD biosynthetic process"/>
    <property type="evidence" value="ECO:0007669"/>
    <property type="project" value="UniProtKB-UniRule"/>
</dbReference>
<dbReference type="CDD" id="cd02165">
    <property type="entry name" value="NMNAT"/>
    <property type="match status" value="1"/>
</dbReference>
<dbReference type="Gene3D" id="3.40.50.620">
    <property type="entry name" value="HUPs"/>
    <property type="match status" value="1"/>
</dbReference>
<dbReference type="HAMAP" id="MF_00244">
    <property type="entry name" value="NaMN_adenylyltr"/>
    <property type="match status" value="1"/>
</dbReference>
<dbReference type="InterPro" id="IPR004821">
    <property type="entry name" value="Cyt_trans-like"/>
</dbReference>
<dbReference type="InterPro" id="IPR005248">
    <property type="entry name" value="NadD/NMNAT"/>
</dbReference>
<dbReference type="InterPro" id="IPR014729">
    <property type="entry name" value="Rossmann-like_a/b/a_fold"/>
</dbReference>
<dbReference type="NCBIfam" id="TIGR00125">
    <property type="entry name" value="cyt_tran_rel"/>
    <property type="match status" value="1"/>
</dbReference>
<dbReference type="NCBIfam" id="TIGR00482">
    <property type="entry name" value="nicotinate (nicotinamide) nucleotide adenylyltransferase"/>
    <property type="match status" value="1"/>
</dbReference>
<dbReference type="NCBIfam" id="NF000839">
    <property type="entry name" value="PRK00071.1-1"/>
    <property type="match status" value="1"/>
</dbReference>
<dbReference type="PANTHER" id="PTHR39321">
    <property type="entry name" value="NICOTINATE-NUCLEOTIDE ADENYLYLTRANSFERASE-RELATED"/>
    <property type="match status" value="1"/>
</dbReference>
<dbReference type="PANTHER" id="PTHR39321:SF3">
    <property type="entry name" value="PHOSPHOPANTETHEINE ADENYLYLTRANSFERASE"/>
    <property type="match status" value="1"/>
</dbReference>
<dbReference type="Pfam" id="PF01467">
    <property type="entry name" value="CTP_transf_like"/>
    <property type="match status" value="1"/>
</dbReference>
<dbReference type="SUPFAM" id="SSF52374">
    <property type="entry name" value="Nucleotidylyl transferase"/>
    <property type="match status" value="1"/>
</dbReference>
<proteinExistence type="inferred from homology"/>
<sequence length="222" mass="24510">MPSLHVFYGGTFDPVHVGHLAIARAAHAALQAPIALIPSADPPHRPTPGSSSMDRLRMLQLAVSKEPGLSADPRELQRAARQNRSSYTVDTLTEVRSELGPKTSIIWLLGADAFVNLSNWKDWQMLPELTHLVIANRPGITLQTQLPPKMATVFNHRWVQDPATLRKTPHGHLWLLNQHPNPSSASKVRAAISAAAHWEADLTPEVAQYIRTHGLYGIHDIN</sequence>
<gene>
    <name evidence="1" type="primary">nadD</name>
    <name type="ordered locus">PD_1233</name>
</gene>
<name>NADD_XYLFT</name>
<reference key="1">
    <citation type="journal article" date="2003" name="J. Bacteriol.">
        <title>Comparative analyses of the complete genome sequences of Pierce's disease and citrus variegated chlorosis strains of Xylella fastidiosa.</title>
        <authorList>
            <person name="Van Sluys M.A."/>
            <person name="de Oliveira M.C."/>
            <person name="Monteiro-Vitorello C.B."/>
            <person name="Miyaki C.Y."/>
            <person name="Furlan L.R."/>
            <person name="Camargo L.E.A."/>
            <person name="da Silva A.C.R."/>
            <person name="Moon D.H."/>
            <person name="Takita M.A."/>
            <person name="Lemos E.G.M."/>
            <person name="Machado M.A."/>
            <person name="Ferro M.I.T."/>
            <person name="da Silva F.R."/>
            <person name="Goldman M.H.S."/>
            <person name="Goldman G.H."/>
            <person name="Lemos M.V.F."/>
            <person name="El-Dorry H."/>
            <person name="Tsai S.M."/>
            <person name="Carrer H."/>
            <person name="Carraro D.M."/>
            <person name="de Oliveira R.C."/>
            <person name="Nunes L.R."/>
            <person name="Siqueira W.J."/>
            <person name="Coutinho L.L."/>
            <person name="Kimura E.T."/>
            <person name="Ferro E.S."/>
            <person name="Harakava R."/>
            <person name="Kuramae E.E."/>
            <person name="Marino C.L."/>
            <person name="Giglioti E."/>
            <person name="Abreu I.L."/>
            <person name="Alves L.M.C."/>
            <person name="do Amaral A.M."/>
            <person name="Baia G.S."/>
            <person name="Blanco S.R."/>
            <person name="Brito M.S."/>
            <person name="Cannavan F.S."/>
            <person name="Celestino A.V."/>
            <person name="da Cunha A.F."/>
            <person name="Fenille R.C."/>
            <person name="Ferro J.A."/>
            <person name="Formighieri E.F."/>
            <person name="Kishi L.T."/>
            <person name="Leoni S.G."/>
            <person name="Oliveira A.R."/>
            <person name="Rosa V.E. Jr."/>
            <person name="Sassaki F.T."/>
            <person name="Sena J.A.D."/>
            <person name="de Souza A.A."/>
            <person name="Truffi D."/>
            <person name="Tsukumo F."/>
            <person name="Yanai G.M."/>
            <person name="Zaros L.G."/>
            <person name="Civerolo E.L."/>
            <person name="Simpson A.J.G."/>
            <person name="Almeida N.F. Jr."/>
            <person name="Setubal J.C."/>
            <person name="Kitajima J.P."/>
        </authorList>
    </citation>
    <scope>NUCLEOTIDE SEQUENCE [LARGE SCALE GENOMIC DNA]</scope>
    <source>
        <strain>Temecula1 / ATCC 700964</strain>
    </source>
</reference>
<organism>
    <name type="scientific">Xylella fastidiosa (strain Temecula1 / ATCC 700964)</name>
    <dbReference type="NCBI Taxonomy" id="183190"/>
    <lineage>
        <taxon>Bacteria</taxon>
        <taxon>Pseudomonadati</taxon>
        <taxon>Pseudomonadota</taxon>
        <taxon>Gammaproteobacteria</taxon>
        <taxon>Lysobacterales</taxon>
        <taxon>Lysobacteraceae</taxon>
        <taxon>Xylella</taxon>
    </lineage>
</organism>
<accession>Q87C62</accession>
<keyword id="KW-0067">ATP-binding</keyword>
<keyword id="KW-0520">NAD</keyword>
<keyword id="KW-0547">Nucleotide-binding</keyword>
<keyword id="KW-0548">Nucleotidyltransferase</keyword>
<keyword id="KW-0662">Pyridine nucleotide biosynthesis</keyword>
<keyword id="KW-1185">Reference proteome</keyword>
<keyword id="KW-0808">Transferase</keyword>
<feature type="chain" id="PRO_0000181467" description="Probable nicotinate-nucleotide adenylyltransferase">
    <location>
        <begin position="1"/>
        <end position="222"/>
    </location>
</feature>